<gene>
    <name evidence="1" type="primary">ligA</name>
    <name type="ordered locus">RBAM_007020</name>
</gene>
<proteinExistence type="inferred from homology"/>
<reference key="1">
    <citation type="journal article" date="2007" name="Nat. Biotechnol.">
        <title>Comparative analysis of the complete genome sequence of the plant growth-promoting bacterium Bacillus amyloliquefaciens FZB42.</title>
        <authorList>
            <person name="Chen X.H."/>
            <person name="Koumoutsi A."/>
            <person name="Scholz R."/>
            <person name="Eisenreich A."/>
            <person name="Schneider K."/>
            <person name="Heinemeyer I."/>
            <person name="Morgenstern B."/>
            <person name="Voss B."/>
            <person name="Hess W.R."/>
            <person name="Reva O."/>
            <person name="Junge H."/>
            <person name="Voigt B."/>
            <person name="Jungblut P.R."/>
            <person name="Vater J."/>
            <person name="Suessmuth R."/>
            <person name="Liesegang H."/>
            <person name="Strittmatter A."/>
            <person name="Gottschalk G."/>
            <person name="Borriss R."/>
        </authorList>
    </citation>
    <scope>NUCLEOTIDE SEQUENCE [LARGE SCALE GENOMIC DNA]</scope>
    <source>
        <strain>DSM 23117 / BGSC 10A6 / LMG 26770 / FZB42</strain>
    </source>
</reference>
<protein>
    <recommendedName>
        <fullName evidence="1">DNA ligase</fullName>
        <ecNumber evidence="1">6.5.1.2</ecNumber>
    </recommendedName>
    <alternativeName>
        <fullName evidence="1">Polydeoxyribonucleotide synthase [NAD(+)]</fullName>
    </alternativeName>
</protein>
<dbReference type="EC" id="6.5.1.2" evidence="1"/>
<dbReference type="EMBL" id="CP000560">
    <property type="protein sequence ID" value="ABS73087.1"/>
    <property type="molecule type" value="Genomic_DNA"/>
</dbReference>
<dbReference type="SMR" id="A7Z261"/>
<dbReference type="KEGG" id="bay:RBAM_007020"/>
<dbReference type="HOGENOM" id="CLU_007764_2_1_9"/>
<dbReference type="Proteomes" id="UP000001120">
    <property type="component" value="Chromosome"/>
</dbReference>
<dbReference type="GO" id="GO:0005829">
    <property type="term" value="C:cytosol"/>
    <property type="evidence" value="ECO:0007669"/>
    <property type="project" value="TreeGrafter"/>
</dbReference>
<dbReference type="GO" id="GO:0005524">
    <property type="term" value="F:ATP binding"/>
    <property type="evidence" value="ECO:0007669"/>
    <property type="project" value="InterPro"/>
</dbReference>
<dbReference type="GO" id="GO:0003677">
    <property type="term" value="F:DNA binding"/>
    <property type="evidence" value="ECO:0007669"/>
    <property type="project" value="InterPro"/>
</dbReference>
<dbReference type="GO" id="GO:0003911">
    <property type="term" value="F:DNA ligase (NAD+) activity"/>
    <property type="evidence" value="ECO:0007669"/>
    <property type="project" value="UniProtKB-UniRule"/>
</dbReference>
<dbReference type="GO" id="GO:0046872">
    <property type="term" value="F:metal ion binding"/>
    <property type="evidence" value="ECO:0007669"/>
    <property type="project" value="UniProtKB-KW"/>
</dbReference>
<dbReference type="GO" id="GO:0006281">
    <property type="term" value="P:DNA repair"/>
    <property type="evidence" value="ECO:0007669"/>
    <property type="project" value="UniProtKB-KW"/>
</dbReference>
<dbReference type="GO" id="GO:0006260">
    <property type="term" value="P:DNA replication"/>
    <property type="evidence" value="ECO:0007669"/>
    <property type="project" value="UniProtKB-KW"/>
</dbReference>
<dbReference type="GO" id="GO:0006355">
    <property type="term" value="P:regulation of DNA-templated transcription"/>
    <property type="evidence" value="ECO:0007669"/>
    <property type="project" value="InterPro"/>
</dbReference>
<dbReference type="CDD" id="cd17748">
    <property type="entry name" value="BRCT_DNA_ligase_like"/>
    <property type="match status" value="1"/>
</dbReference>
<dbReference type="CDD" id="cd00114">
    <property type="entry name" value="LIGANc"/>
    <property type="match status" value="1"/>
</dbReference>
<dbReference type="FunFam" id="1.10.150.20:FF:000006">
    <property type="entry name" value="DNA ligase"/>
    <property type="match status" value="1"/>
</dbReference>
<dbReference type="FunFam" id="1.10.150.20:FF:000007">
    <property type="entry name" value="DNA ligase"/>
    <property type="match status" value="1"/>
</dbReference>
<dbReference type="FunFam" id="1.10.287.610:FF:000002">
    <property type="entry name" value="DNA ligase"/>
    <property type="match status" value="1"/>
</dbReference>
<dbReference type="FunFam" id="2.40.50.140:FF:000012">
    <property type="entry name" value="DNA ligase"/>
    <property type="match status" value="1"/>
</dbReference>
<dbReference type="FunFam" id="3.30.470.30:FF:000001">
    <property type="entry name" value="DNA ligase"/>
    <property type="match status" value="1"/>
</dbReference>
<dbReference type="FunFam" id="3.40.50.10190:FF:000026">
    <property type="entry name" value="DNA ligase"/>
    <property type="match status" value="1"/>
</dbReference>
<dbReference type="FunFam" id="6.20.10.30:FF:000002">
    <property type="entry name" value="DNA ligase"/>
    <property type="match status" value="1"/>
</dbReference>
<dbReference type="Gene3D" id="6.20.10.30">
    <property type="match status" value="1"/>
</dbReference>
<dbReference type="Gene3D" id="1.10.150.20">
    <property type="entry name" value="5' to 3' exonuclease, C-terminal subdomain"/>
    <property type="match status" value="2"/>
</dbReference>
<dbReference type="Gene3D" id="3.40.50.10190">
    <property type="entry name" value="BRCT domain"/>
    <property type="match status" value="1"/>
</dbReference>
<dbReference type="Gene3D" id="3.30.470.30">
    <property type="entry name" value="DNA ligase/mRNA capping enzyme"/>
    <property type="match status" value="1"/>
</dbReference>
<dbReference type="Gene3D" id="1.10.287.610">
    <property type="entry name" value="Helix hairpin bin"/>
    <property type="match status" value="1"/>
</dbReference>
<dbReference type="Gene3D" id="2.40.50.140">
    <property type="entry name" value="Nucleic acid-binding proteins"/>
    <property type="match status" value="1"/>
</dbReference>
<dbReference type="HAMAP" id="MF_01588">
    <property type="entry name" value="DNA_ligase_A"/>
    <property type="match status" value="1"/>
</dbReference>
<dbReference type="InterPro" id="IPR001357">
    <property type="entry name" value="BRCT_dom"/>
</dbReference>
<dbReference type="InterPro" id="IPR036420">
    <property type="entry name" value="BRCT_dom_sf"/>
</dbReference>
<dbReference type="InterPro" id="IPR041663">
    <property type="entry name" value="DisA/LigA_HHH"/>
</dbReference>
<dbReference type="InterPro" id="IPR001679">
    <property type="entry name" value="DNA_ligase"/>
</dbReference>
<dbReference type="InterPro" id="IPR018239">
    <property type="entry name" value="DNA_ligase_AS"/>
</dbReference>
<dbReference type="InterPro" id="IPR033136">
    <property type="entry name" value="DNA_ligase_CS"/>
</dbReference>
<dbReference type="InterPro" id="IPR013839">
    <property type="entry name" value="DNAligase_adenylation"/>
</dbReference>
<dbReference type="InterPro" id="IPR013840">
    <property type="entry name" value="DNAligase_N"/>
</dbReference>
<dbReference type="InterPro" id="IPR003583">
    <property type="entry name" value="Hlx-hairpin-Hlx_DNA-bd_motif"/>
</dbReference>
<dbReference type="InterPro" id="IPR012340">
    <property type="entry name" value="NA-bd_OB-fold"/>
</dbReference>
<dbReference type="InterPro" id="IPR004150">
    <property type="entry name" value="NAD_DNA_ligase_OB"/>
</dbReference>
<dbReference type="InterPro" id="IPR010994">
    <property type="entry name" value="RuvA_2-like"/>
</dbReference>
<dbReference type="InterPro" id="IPR002078">
    <property type="entry name" value="Sigma_54_int"/>
</dbReference>
<dbReference type="InterPro" id="IPR004149">
    <property type="entry name" value="Znf_DNAligase_C4"/>
</dbReference>
<dbReference type="NCBIfam" id="TIGR00575">
    <property type="entry name" value="dnlj"/>
    <property type="match status" value="1"/>
</dbReference>
<dbReference type="NCBIfam" id="NF005932">
    <property type="entry name" value="PRK07956.1"/>
    <property type="match status" value="1"/>
</dbReference>
<dbReference type="PANTHER" id="PTHR23389">
    <property type="entry name" value="CHROMOSOME TRANSMISSION FIDELITY FACTOR 18"/>
    <property type="match status" value="1"/>
</dbReference>
<dbReference type="PANTHER" id="PTHR23389:SF9">
    <property type="entry name" value="DNA LIGASE"/>
    <property type="match status" value="1"/>
</dbReference>
<dbReference type="Pfam" id="PF00533">
    <property type="entry name" value="BRCT"/>
    <property type="match status" value="1"/>
</dbReference>
<dbReference type="Pfam" id="PF01653">
    <property type="entry name" value="DNA_ligase_aden"/>
    <property type="match status" value="1"/>
</dbReference>
<dbReference type="Pfam" id="PF03120">
    <property type="entry name" value="DNA_ligase_OB"/>
    <property type="match status" value="1"/>
</dbReference>
<dbReference type="Pfam" id="PF03119">
    <property type="entry name" value="DNA_ligase_ZBD"/>
    <property type="match status" value="1"/>
</dbReference>
<dbReference type="Pfam" id="PF12826">
    <property type="entry name" value="HHH_2"/>
    <property type="match status" value="1"/>
</dbReference>
<dbReference type="Pfam" id="PF14520">
    <property type="entry name" value="HHH_5"/>
    <property type="match status" value="1"/>
</dbReference>
<dbReference type="Pfam" id="PF22745">
    <property type="entry name" value="Nlig-Ia"/>
    <property type="match status" value="1"/>
</dbReference>
<dbReference type="PIRSF" id="PIRSF001604">
    <property type="entry name" value="LigA"/>
    <property type="match status" value="1"/>
</dbReference>
<dbReference type="SMART" id="SM00292">
    <property type="entry name" value="BRCT"/>
    <property type="match status" value="1"/>
</dbReference>
<dbReference type="SMART" id="SM00278">
    <property type="entry name" value="HhH1"/>
    <property type="match status" value="3"/>
</dbReference>
<dbReference type="SMART" id="SM00532">
    <property type="entry name" value="LIGANc"/>
    <property type="match status" value="1"/>
</dbReference>
<dbReference type="SUPFAM" id="SSF52113">
    <property type="entry name" value="BRCT domain"/>
    <property type="match status" value="1"/>
</dbReference>
<dbReference type="SUPFAM" id="SSF56091">
    <property type="entry name" value="DNA ligase/mRNA capping enzyme, catalytic domain"/>
    <property type="match status" value="1"/>
</dbReference>
<dbReference type="SUPFAM" id="SSF50249">
    <property type="entry name" value="Nucleic acid-binding proteins"/>
    <property type="match status" value="1"/>
</dbReference>
<dbReference type="SUPFAM" id="SSF47781">
    <property type="entry name" value="RuvA domain 2-like"/>
    <property type="match status" value="1"/>
</dbReference>
<dbReference type="PROSITE" id="PS50172">
    <property type="entry name" value="BRCT"/>
    <property type="match status" value="1"/>
</dbReference>
<dbReference type="PROSITE" id="PS01055">
    <property type="entry name" value="DNA_LIGASE_N1"/>
    <property type="match status" value="1"/>
</dbReference>
<dbReference type="PROSITE" id="PS01056">
    <property type="entry name" value="DNA_LIGASE_N2"/>
    <property type="match status" value="1"/>
</dbReference>
<keyword id="KW-0227">DNA damage</keyword>
<keyword id="KW-0234">DNA repair</keyword>
<keyword id="KW-0235">DNA replication</keyword>
<keyword id="KW-0436">Ligase</keyword>
<keyword id="KW-0460">Magnesium</keyword>
<keyword id="KW-0464">Manganese</keyword>
<keyword id="KW-0479">Metal-binding</keyword>
<keyword id="KW-0520">NAD</keyword>
<keyword id="KW-0862">Zinc</keyword>
<accession>A7Z261</accession>
<sequence length="669" mass="75237">MMDKETAKHRAEELRRTIDQYSYEYYTLDEPSVPDSEYDRLMQELIAIEEEHPELRTPDSPTQRVGGAVLESFQKVQHGTPMLSLGNAFNDDDLRDFDRRVRQAVGDGVAYNVELKIDGLAVSLRYEDGYFVRGATRGDGTTGEDITENLKTIRNIPLKMKRNLSIEVRGEAYMPKQSFEALNEERLKHEEEPFANPRNAAAGSLRQLDPKIAAKRNLDIFVYSIAELDEMGVETQSQGLDFLDELGFKTNQERKKCATIDEVIEMIEELQAKRADLPYEIDGIVIKVDSLDQQEELGYTAKSPRWAIAYKFPAEEVVTKLLDIELNVGRTGVITPTAVLEPVKVAGTTVSRASLHNEDLIKEKDIRILDKVVVKKAGDIIPEVVNVLIEQRTGEEKEFNMPTGCPECESELVRIEGEVALRCINPECPAQIREGLIHFVSRNAMNIDGLGERVITQLFREHLVRNVADLYKLTKEQVIRLERMGEKSTDNLISSIQKSKENSLERLLFGLGIRFIGSKAAKTLAMHFESLENLKQVTEEELLAVDEIGEKMADAVITYFRKEEMLELLNELEELGVNTLYKGPKKVKAEDSDSYFAGKTIVLTGKLEELSRNEAKAQIEALGGKLTGSVSKKTDLLIAGEAAGSKLTKAQELNIEVWNEAQLLGELKK</sequence>
<organism>
    <name type="scientific">Bacillus velezensis (strain DSM 23117 / BGSC 10A6 / LMG 26770 / FZB42)</name>
    <name type="common">Bacillus amyloliquefaciens subsp. plantarum</name>
    <dbReference type="NCBI Taxonomy" id="326423"/>
    <lineage>
        <taxon>Bacteria</taxon>
        <taxon>Bacillati</taxon>
        <taxon>Bacillota</taxon>
        <taxon>Bacilli</taxon>
        <taxon>Bacillales</taxon>
        <taxon>Bacillaceae</taxon>
        <taxon>Bacillus</taxon>
        <taxon>Bacillus amyloliquefaciens group</taxon>
    </lineage>
</organism>
<comment type="function">
    <text evidence="1">DNA ligase that catalyzes the formation of phosphodiester linkages between 5'-phosphoryl and 3'-hydroxyl groups in double-stranded DNA using NAD as a coenzyme and as the energy source for the reaction. It is essential for DNA replication and repair of damaged DNA.</text>
</comment>
<comment type="catalytic activity">
    <reaction evidence="1">
        <text>NAD(+) + (deoxyribonucleotide)n-3'-hydroxyl + 5'-phospho-(deoxyribonucleotide)m = (deoxyribonucleotide)n+m + AMP + beta-nicotinamide D-nucleotide.</text>
        <dbReference type="EC" id="6.5.1.2"/>
    </reaction>
</comment>
<comment type="cofactor">
    <cofactor evidence="1">
        <name>Mg(2+)</name>
        <dbReference type="ChEBI" id="CHEBI:18420"/>
    </cofactor>
    <cofactor evidence="1">
        <name>Mn(2+)</name>
        <dbReference type="ChEBI" id="CHEBI:29035"/>
    </cofactor>
</comment>
<comment type="similarity">
    <text evidence="1">Belongs to the NAD-dependent DNA ligase family. LigA subfamily.</text>
</comment>
<name>DNLJ_BACVZ</name>
<feature type="chain" id="PRO_0000313121" description="DNA ligase">
    <location>
        <begin position="1"/>
        <end position="669"/>
    </location>
</feature>
<feature type="domain" description="BRCT" evidence="1">
    <location>
        <begin position="591"/>
        <end position="669"/>
    </location>
</feature>
<feature type="active site" description="N6-AMP-lysine intermediate" evidence="1">
    <location>
        <position position="116"/>
    </location>
</feature>
<feature type="binding site" evidence="1">
    <location>
        <begin position="35"/>
        <end position="39"/>
    </location>
    <ligand>
        <name>NAD(+)</name>
        <dbReference type="ChEBI" id="CHEBI:57540"/>
    </ligand>
</feature>
<feature type="binding site" evidence="1">
    <location>
        <begin position="84"/>
        <end position="85"/>
    </location>
    <ligand>
        <name>NAD(+)</name>
        <dbReference type="ChEBI" id="CHEBI:57540"/>
    </ligand>
</feature>
<feature type="binding site" evidence="1">
    <location>
        <position position="114"/>
    </location>
    <ligand>
        <name>NAD(+)</name>
        <dbReference type="ChEBI" id="CHEBI:57540"/>
    </ligand>
</feature>
<feature type="binding site" evidence="1">
    <location>
        <position position="137"/>
    </location>
    <ligand>
        <name>NAD(+)</name>
        <dbReference type="ChEBI" id="CHEBI:57540"/>
    </ligand>
</feature>
<feature type="binding site" evidence="1">
    <location>
        <position position="171"/>
    </location>
    <ligand>
        <name>NAD(+)</name>
        <dbReference type="ChEBI" id="CHEBI:57540"/>
    </ligand>
</feature>
<feature type="binding site" evidence="1">
    <location>
        <position position="287"/>
    </location>
    <ligand>
        <name>NAD(+)</name>
        <dbReference type="ChEBI" id="CHEBI:57540"/>
    </ligand>
</feature>
<feature type="binding site" evidence="1">
    <location>
        <position position="311"/>
    </location>
    <ligand>
        <name>NAD(+)</name>
        <dbReference type="ChEBI" id="CHEBI:57540"/>
    </ligand>
</feature>
<feature type="binding site" evidence="1">
    <location>
        <position position="405"/>
    </location>
    <ligand>
        <name>Zn(2+)</name>
        <dbReference type="ChEBI" id="CHEBI:29105"/>
    </ligand>
</feature>
<feature type="binding site" evidence="1">
    <location>
        <position position="408"/>
    </location>
    <ligand>
        <name>Zn(2+)</name>
        <dbReference type="ChEBI" id="CHEBI:29105"/>
    </ligand>
</feature>
<feature type="binding site" evidence="1">
    <location>
        <position position="423"/>
    </location>
    <ligand>
        <name>Zn(2+)</name>
        <dbReference type="ChEBI" id="CHEBI:29105"/>
    </ligand>
</feature>
<feature type="binding site" evidence="1">
    <location>
        <position position="428"/>
    </location>
    <ligand>
        <name>Zn(2+)</name>
        <dbReference type="ChEBI" id="CHEBI:29105"/>
    </ligand>
</feature>
<evidence type="ECO:0000255" key="1">
    <source>
        <dbReference type="HAMAP-Rule" id="MF_01588"/>
    </source>
</evidence>